<keyword id="KW-0153">Cholesterol metabolism</keyword>
<keyword id="KW-0256">Endoplasmic reticulum</keyword>
<keyword id="KW-0443">Lipid metabolism</keyword>
<keyword id="KW-0446">Lipid-binding</keyword>
<keyword id="KW-0472">Membrane</keyword>
<keyword id="KW-0558">Oxidation</keyword>
<keyword id="KW-0597">Phosphoprotein</keyword>
<keyword id="KW-1185">Reference proteome</keyword>
<keyword id="KW-0753">Steroid metabolism</keyword>
<keyword id="KW-1207">Sterol metabolism</keyword>
<keyword id="KW-0882">Thioester bond</keyword>
<keyword id="KW-0812">Transmembrane</keyword>
<keyword id="KW-1133">Transmembrane helix</keyword>
<keyword id="KW-0832">Ubl conjugation</keyword>
<gene>
    <name evidence="8 10" type="primary">Insig2</name>
</gene>
<feature type="chain" id="PRO_0000286798" description="Insulin-induced gene 2 protein">
    <location>
        <begin position="1"/>
        <end position="225"/>
    </location>
</feature>
<feature type="topological domain" description="Cytoplasmic" evidence="9">
    <location>
        <begin position="1"/>
        <end position="28"/>
    </location>
</feature>
<feature type="transmembrane region" description="Helical; Name=1" evidence="1">
    <location>
        <begin position="29"/>
        <end position="51"/>
    </location>
</feature>
<feature type="topological domain" description="Lumenal" evidence="9">
    <location>
        <begin position="52"/>
        <end position="70"/>
    </location>
</feature>
<feature type="transmembrane region" description="Helical; Name=2" evidence="1">
    <location>
        <begin position="71"/>
        <end position="88"/>
    </location>
</feature>
<feature type="topological domain" description="Cytoplasmic" evidence="9">
    <location>
        <begin position="89"/>
        <end position="103"/>
    </location>
</feature>
<feature type="transmembrane region" description="Helical; Name=3" evidence="1">
    <location>
        <begin position="104"/>
        <end position="126"/>
    </location>
</feature>
<feature type="topological domain" description="Lumenal" evidence="9">
    <location>
        <begin position="127"/>
        <end position="129"/>
    </location>
</feature>
<feature type="transmembrane region" description="Helical; Name=4" evidence="1">
    <location>
        <begin position="130"/>
        <end position="148"/>
    </location>
</feature>
<feature type="topological domain" description="Cytoplasmic" evidence="9">
    <location>
        <begin position="149"/>
        <end position="153"/>
    </location>
</feature>
<feature type="transmembrane region" description="Helical; Name=5" evidence="1">
    <location>
        <begin position="154"/>
        <end position="175"/>
    </location>
</feature>
<feature type="topological domain" description="Lumenal" evidence="9">
    <location>
        <begin position="176"/>
        <end position="189"/>
    </location>
</feature>
<feature type="transmembrane region" description="Helical; Name=6" evidence="1">
    <location>
        <begin position="190"/>
        <end position="207"/>
    </location>
</feature>
<feature type="topological domain" description="Cytoplasmic" evidence="9">
    <location>
        <begin position="208"/>
        <end position="225"/>
    </location>
</feature>
<feature type="short sequence motif" description="KxHxx" evidence="2">
    <location>
        <begin position="219"/>
        <end position="225"/>
    </location>
</feature>
<feature type="site" description="Required for the recognition of 25-hydroxycholesterol" evidence="2">
    <location>
        <position position="115"/>
    </location>
</feature>
<feature type="modified residue" description="Phosphoserine" evidence="2">
    <location>
        <position position="151"/>
    </location>
</feature>
<feature type="modified residue" description="Cysteine sulfenic acid (-SOH); alternate" evidence="2">
    <location>
        <position position="215"/>
    </location>
</feature>
<feature type="cross-link" description="Glycyl cysteine thioester (Cys-Gly) (interchain with G-Cter in ubiquitin); alternate" evidence="2">
    <location>
        <position position="215"/>
    </location>
</feature>
<feature type="sequence conflict" description="In Ref. 2; BAC34233." evidence="9" ref="2">
    <original>P</original>
    <variation>H</variation>
    <location>
        <position position="98"/>
    </location>
</feature>
<feature type="sequence conflict" description="In Ref. 2; BAE38307." evidence="9" ref="2">
    <original>S</original>
    <variation>Y</variation>
    <location>
        <position position="106"/>
    </location>
</feature>
<sequence>MAEGETESPRPKKCGPYISSVTSQSVNVVIRGVVLFFIGVFLALVLNLLQIQRNVTLFPPDVITSIFSSAWWVPPCCGTASAVIGLLYPCIDRHLGEPHKFKREWSSVMRCVAVFVGINHASAKVDFDNNFQFSLTLAALSVGLWWTFDRSRSGFGLGVGIAFLATVVTQLLVYNGVYQYTSPDFLYVRSWLPCIFFAGGITMGNIGRQLAMYECKVIAEKSHQE</sequence>
<dbReference type="EMBL" id="AF527631">
    <property type="protein sequence ID" value="AAN28332.1"/>
    <property type="molecule type" value="mRNA"/>
</dbReference>
<dbReference type="EMBL" id="AK161256">
    <property type="protein sequence ID" value="BAE36273.1"/>
    <property type="molecule type" value="mRNA"/>
</dbReference>
<dbReference type="EMBL" id="AK154543">
    <property type="protein sequence ID" value="BAE32667.1"/>
    <property type="molecule type" value="mRNA"/>
</dbReference>
<dbReference type="EMBL" id="AK152076">
    <property type="protein sequence ID" value="BAE30928.1"/>
    <property type="molecule type" value="mRNA"/>
</dbReference>
<dbReference type="EMBL" id="AK050394">
    <property type="protein sequence ID" value="BAC34233.1"/>
    <property type="molecule type" value="mRNA"/>
</dbReference>
<dbReference type="EMBL" id="AK165634">
    <property type="protein sequence ID" value="BAE38307.1"/>
    <property type="molecule type" value="mRNA"/>
</dbReference>
<dbReference type="EMBL" id="AK040703">
    <property type="protein sequence ID" value="BAC30676.1"/>
    <property type="molecule type" value="mRNA"/>
</dbReference>
<dbReference type="EMBL" id="BC024411">
    <property type="protein sequence ID" value="AAH24411.1"/>
    <property type="molecule type" value="mRNA"/>
</dbReference>
<dbReference type="EMBL" id="BC023874">
    <property type="protein sequence ID" value="AAH23874.1"/>
    <property type="molecule type" value="mRNA"/>
</dbReference>
<dbReference type="EMBL" id="BC023067">
    <property type="protein sequence ID" value="AAH23067.1"/>
    <property type="molecule type" value="mRNA"/>
</dbReference>
<dbReference type="EMBL" id="BC015288">
    <property type="protein sequence ID" value="AAH15288.1"/>
    <property type="molecule type" value="mRNA"/>
</dbReference>
<dbReference type="CCDS" id="CCDS15236.1"/>
<dbReference type="RefSeq" id="NP_001258460.1">
    <property type="nucleotide sequence ID" value="NM_001271531.1"/>
</dbReference>
<dbReference type="RefSeq" id="NP_001344180.1">
    <property type="nucleotide sequence ID" value="NM_001357251.1"/>
</dbReference>
<dbReference type="RefSeq" id="NP_001418216.1">
    <property type="nucleotide sequence ID" value="NM_001431287.1"/>
</dbReference>
<dbReference type="RefSeq" id="NP_001418218.1">
    <property type="nucleotide sequence ID" value="NM_001431289.1"/>
</dbReference>
<dbReference type="RefSeq" id="NP_001418219.1">
    <property type="nucleotide sequence ID" value="NM_001431290.1"/>
</dbReference>
<dbReference type="RefSeq" id="NP_598509.1">
    <property type="nucleotide sequence ID" value="NM_133748.2"/>
</dbReference>
<dbReference type="RefSeq" id="NP_835183.1">
    <property type="nucleotide sequence ID" value="NM_178082.3"/>
</dbReference>
<dbReference type="RefSeq" id="XP_006529952.1">
    <property type="nucleotide sequence ID" value="XM_006529889.1"/>
</dbReference>
<dbReference type="RefSeq" id="XP_006529953.1">
    <property type="nucleotide sequence ID" value="XM_006529890.3"/>
</dbReference>
<dbReference type="RefSeq" id="XP_006529954.1">
    <property type="nucleotide sequence ID" value="XM_006529891.3"/>
</dbReference>
<dbReference type="RefSeq" id="XP_006529955.1">
    <property type="nucleotide sequence ID" value="XM_006529892.1"/>
</dbReference>
<dbReference type="SMR" id="Q91WG1"/>
<dbReference type="FunCoup" id="Q91WG1">
    <property type="interactions" value="709"/>
</dbReference>
<dbReference type="STRING" id="10090.ENSMUSP00000003818"/>
<dbReference type="iPTMnet" id="Q91WG1"/>
<dbReference type="PhosphoSitePlus" id="Q91WG1"/>
<dbReference type="SwissPalm" id="Q91WG1"/>
<dbReference type="PaxDb" id="10090-ENSMUSP00000003818"/>
<dbReference type="ProteomicsDB" id="266994"/>
<dbReference type="Antibodypedia" id="55566">
    <property type="antibodies" value="117 antibodies from 26 providers"/>
</dbReference>
<dbReference type="Ensembl" id="ENSMUST00000003818.14">
    <property type="protein sequence ID" value="ENSMUSP00000003818.8"/>
    <property type="gene ID" value="ENSMUSG00000003721.15"/>
</dbReference>
<dbReference type="Ensembl" id="ENSMUST00000071064.13">
    <property type="protein sequence ID" value="ENSMUSP00000065485.7"/>
    <property type="gene ID" value="ENSMUSG00000003721.15"/>
</dbReference>
<dbReference type="Ensembl" id="ENSMUST00000159085.8">
    <property type="protein sequence ID" value="ENSMUSP00000124345.2"/>
    <property type="gene ID" value="ENSMUSG00000003721.15"/>
</dbReference>
<dbReference type="Ensembl" id="ENSMUST00000160968.8">
    <property type="protein sequence ID" value="ENSMUSP00000123747.2"/>
    <property type="gene ID" value="ENSMUSG00000003721.15"/>
</dbReference>
<dbReference type="GeneID" id="72999"/>
<dbReference type="KEGG" id="mmu:72999"/>
<dbReference type="UCSC" id="uc007cjo.1">
    <property type="organism name" value="mouse"/>
</dbReference>
<dbReference type="AGR" id="MGI:1920249"/>
<dbReference type="CTD" id="51141"/>
<dbReference type="MGI" id="MGI:1920249">
    <property type="gene designation" value="Insig2"/>
</dbReference>
<dbReference type="VEuPathDB" id="HostDB:ENSMUSG00000003721"/>
<dbReference type="eggNOG" id="KOG4363">
    <property type="taxonomic scope" value="Eukaryota"/>
</dbReference>
<dbReference type="GeneTree" id="ENSGT00580000081600"/>
<dbReference type="HOGENOM" id="CLU_092922_0_0_1"/>
<dbReference type="InParanoid" id="Q91WG1"/>
<dbReference type="OMA" id="SKKCGPY"/>
<dbReference type="OrthoDB" id="205546at2759"/>
<dbReference type="PhylomeDB" id="Q91WG1"/>
<dbReference type="TreeFam" id="TF331013"/>
<dbReference type="BioGRID-ORCS" id="72999">
    <property type="hits" value="1 hit in 80 CRISPR screens"/>
</dbReference>
<dbReference type="PRO" id="PR:Q91WG1"/>
<dbReference type="Proteomes" id="UP000000589">
    <property type="component" value="Chromosome 1"/>
</dbReference>
<dbReference type="RNAct" id="Q91WG1">
    <property type="molecule type" value="protein"/>
</dbReference>
<dbReference type="Bgee" id="ENSMUSG00000003721">
    <property type="expression patterns" value="Expressed in interventricular septum and 255 other cell types or tissues"/>
</dbReference>
<dbReference type="ExpressionAtlas" id="Q91WG1">
    <property type="expression patterns" value="baseline and differential"/>
</dbReference>
<dbReference type="GO" id="GO:0032937">
    <property type="term" value="C:SREBP-SCAP-Insig complex"/>
    <property type="evidence" value="ECO:0007669"/>
    <property type="project" value="Ensembl"/>
</dbReference>
<dbReference type="GO" id="GO:0008142">
    <property type="term" value="F:oxysterol binding"/>
    <property type="evidence" value="ECO:0000250"/>
    <property type="project" value="UniProtKB"/>
</dbReference>
<dbReference type="GO" id="GO:0140311">
    <property type="term" value="F:protein sequestering activity"/>
    <property type="evidence" value="ECO:0007669"/>
    <property type="project" value="Ensembl"/>
</dbReference>
<dbReference type="GO" id="GO:0006695">
    <property type="term" value="P:cholesterol biosynthetic process"/>
    <property type="evidence" value="ECO:0000316"/>
    <property type="project" value="MGI"/>
</dbReference>
<dbReference type="GO" id="GO:0008203">
    <property type="term" value="P:cholesterol metabolic process"/>
    <property type="evidence" value="ECO:0000316"/>
    <property type="project" value="MGI"/>
</dbReference>
<dbReference type="GO" id="GO:0060363">
    <property type="term" value="P:cranial suture morphogenesis"/>
    <property type="evidence" value="ECO:0000316"/>
    <property type="project" value="MGI"/>
</dbReference>
<dbReference type="GO" id="GO:0042472">
    <property type="term" value="P:inner ear morphogenesis"/>
    <property type="evidence" value="ECO:0000316"/>
    <property type="project" value="MGI"/>
</dbReference>
<dbReference type="GO" id="GO:0042474">
    <property type="term" value="P:middle ear morphogenesis"/>
    <property type="evidence" value="ECO:0000316"/>
    <property type="project" value="MGI"/>
</dbReference>
<dbReference type="GO" id="GO:0045717">
    <property type="term" value="P:negative regulation of fatty acid biosynthetic process"/>
    <property type="evidence" value="ECO:0000316"/>
    <property type="project" value="MGI"/>
</dbReference>
<dbReference type="GO" id="GO:0010894">
    <property type="term" value="P:negative regulation of steroid biosynthetic process"/>
    <property type="evidence" value="ECO:0000316"/>
    <property type="project" value="MGI"/>
</dbReference>
<dbReference type="GO" id="GO:0070542">
    <property type="term" value="P:response to fatty acid"/>
    <property type="evidence" value="ECO:0007669"/>
    <property type="project" value="Ensembl"/>
</dbReference>
<dbReference type="GO" id="GO:0032868">
    <property type="term" value="P:response to insulin"/>
    <property type="evidence" value="ECO:0007669"/>
    <property type="project" value="Ensembl"/>
</dbReference>
<dbReference type="GO" id="GO:0006991">
    <property type="term" value="P:response to sterol depletion"/>
    <property type="evidence" value="ECO:0000314"/>
    <property type="project" value="MGI"/>
</dbReference>
<dbReference type="GO" id="GO:0060021">
    <property type="term" value="P:roof of mouth development"/>
    <property type="evidence" value="ECO:0000316"/>
    <property type="project" value="MGI"/>
</dbReference>
<dbReference type="GO" id="GO:0032933">
    <property type="term" value="P:SREBP signaling pathway"/>
    <property type="evidence" value="ECO:0000250"/>
    <property type="project" value="UniProtKB"/>
</dbReference>
<dbReference type="GO" id="GO:0036316">
    <property type="term" value="P:SREBP-SCAP complex retention in endoplasmic reticulum"/>
    <property type="evidence" value="ECO:0000250"/>
    <property type="project" value="UniProtKB"/>
</dbReference>
<dbReference type="GO" id="GO:0016126">
    <property type="term" value="P:sterol biosynthetic process"/>
    <property type="evidence" value="ECO:0000316"/>
    <property type="project" value="MGI"/>
</dbReference>
<dbReference type="GO" id="GO:0006641">
    <property type="term" value="P:triglyceride metabolic process"/>
    <property type="evidence" value="ECO:0000316"/>
    <property type="project" value="MGI"/>
</dbReference>
<dbReference type="InterPro" id="IPR025929">
    <property type="entry name" value="INSIG_fam"/>
</dbReference>
<dbReference type="PANTHER" id="PTHR15301">
    <property type="entry name" value="INSULIN-INDUCED GENE 1"/>
    <property type="match status" value="1"/>
</dbReference>
<dbReference type="PANTHER" id="PTHR15301:SF10">
    <property type="entry name" value="INSULIN-INDUCED GENE 2 PROTEIN"/>
    <property type="match status" value="1"/>
</dbReference>
<dbReference type="Pfam" id="PF07281">
    <property type="entry name" value="INSIG"/>
    <property type="match status" value="1"/>
</dbReference>
<proteinExistence type="evidence at protein level"/>
<reference key="1">
    <citation type="journal article" date="2002" name="Proc. Natl. Acad. Sci. U.S.A.">
        <title>Insig-2, a second endoplasmic reticulum protein that binds SCAP and blocks export of sterol regulatory element-binding proteins.</title>
        <authorList>
            <person name="Yabe D."/>
            <person name="Brown M.S."/>
            <person name="Goldstein J.L."/>
        </authorList>
    </citation>
    <scope>NUCLEOTIDE SEQUENCE [MRNA]</scope>
    <scope>FUNCTION</scope>
    <scope>INTERACTION WITH SCAP AND SREBP2 COMPLEX</scope>
</reference>
<reference key="2">
    <citation type="journal article" date="2005" name="Science">
        <title>The transcriptional landscape of the mammalian genome.</title>
        <authorList>
            <person name="Carninci P."/>
            <person name="Kasukawa T."/>
            <person name="Katayama S."/>
            <person name="Gough J."/>
            <person name="Frith M.C."/>
            <person name="Maeda N."/>
            <person name="Oyama R."/>
            <person name="Ravasi T."/>
            <person name="Lenhard B."/>
            <person name="Wells C."/>
            <person name="Kodzius R."/>
            <person name="Shimokawa K."/>
            <person name="Bajic V.B."/>
            <person name="Brenner S.E."/>
            <person name="Batalov S."/>
            <person name="Forrest A.R."/>
            <person name="Zavolan M."/>
            <person name="Davis M.J."/>
            <person name="Wilming L.G."/>
            <person name="Aidinis V."/>
            <person name="Allen J.E."/>
            <person name="Ambesi-Impiombato A."/>
            <person name="Apweiler R."/>
            <person name="Aturaliya R.N."/>
            <person name="Bailey T.L."/>
            <person name="Bansal M."/>
            <person name="Baxter L."/>
            <person name="Beisel K.W."/>
            <person name="Bersano T."/>
            <person name="Bono H."/>
            <person name="Chalk A.M."/>
            <person name="Chiu K.P."/>
            <person name="Choudhary V."/>
            <person name="Christoffels A."/>
            <person name="Clutterbuck D.R."/>
            <person name="Crowe M.L."/>
            <person name="Dalla E."/>
            <person name="Dalrymple B.P."/>
            <person name="de Bono B."/>
            <person name="Della Gatta G."/>
            <person name="di Bernardo D."/>
            <person name="Down T."/>
            <person name="Engstrom P."/>
            <person name="Fagiolini M."/>
            <person name="Faulkner G."/>
            <person name="Fletcher C.F."/>
            <person name="Fukushima T."/>
            <person name="Furuno M."/>
            <person name="Futaki S."/>
            <person name="Gariboldi M."/>
            <person name="Georgii-Hemming P."/>
            <person name="Gingeras T.R."/>
            <person name="Gojobori T."/>
            <person name="Green R.E."/>
            <person name="Gustincich S."/>
            <person name="Harbers M."/>
            <person name="Hayashi Y."/>
            <person name="Hensch T.K."/>
            <person name="Hirokawa N."/>
            <person name="Hill D."/>
            <person name="Huminiecki L."/>
            <person name="Iacono M."/>
            <person name="Ikeo K."/>
            <person name="Iwama A."/>
            <person name="Ishikawa T."/>
            <person name="Jakt M."/>
            <person name="Kanapin A."/>
            <person name="Katoh M."/>
            <person name="Kawasawa Y."/>
            <person name="Kelso J."/>
            <person name="Kitamura H."/>
            <person name="Kitano H."/>
            <person name="Kollias G."/>
            <person name="Krishnan S.P."/>
            <person name="Kruger A."/>
            <person name="Kummerfeld S.K."/>
            <person name="Kurochkin I.V."/>
            <person name="Lareau L.F."/>
            <person name="Lazarevic D."/>
            <person name="Lipovich L."/>
            <person name="Liu J."/>
            <person name="Liuni S."/>
            <person name="McWilliam S."/>
            <person name="Madan Babu M."/>
            <person name="Madera M."/>
            <person name="Marchionni L."/>
            <person name="Matsuda H."/>
            <person name="Matsuzawa S."/>
            <person name="Miki H."/>
            <person name="Mignone F."/>
            <person name="Miyake S."/>
            <person name="Morris K."/>
            <person name="Mottagui-Tabar S."/>
            <person name="Mulder N."/>
            <person name="Nakano N."/>
            <person name="Nakauchi H."/>
            <person name="Ng P."/>
            <person name="Nilsson R."/>
            <person name="Nishiguchi S."/>
            <person name="Nishikawa S."/>
            <person name="Nori F."/>
            <person name="Ohara O."/>
            <person name="Okazaki Y."/>
            <person name="Orlando V."/>
            <person name="Pang K.C."/>
            <person name="Pavan W.J."/>
            <person name="Pavesi G."/>
            <person name="Pesole G."/>
            <person name="Petrovsky N."/>
            <person name="Piazza S."/>
            <person name="Reed J."/>
            <person name="Reid J.F."/>
            <person name="Ring B.Z."/>
            <person name="Ringwald M."/>
            <person name="Rost B."/>
            <person name="Ruan Y."/>
            <person name="Salzberg S.L."/>
            <person name="Sandelin A."/>
            <person name="Schneider C."/>
            <person name="Schoenbach C."/>
            <person name="Sekiguchi K."/>
            <person name="Semple C.A."/>
            <person name="Seno S."/>
            <person name="Sessa L."/>
            <person name="Sheng Y."/>
            <person name="Shibata Y."/>
            <person name="Shimada H."/>
            <person name="Shimada K."/>
            <person name="Silva D."/>
            <person name="Sinclair B."/>
            <person name="Sperling S."/>
            <person name="Stupka E."/>
            <person name="Sugiura K."/>
            <person name="Sultana R."/>
            <person name="Takenaka Y."/>
            <person name="Taki K."/>
            <person name="Tammoja K."/>
            <person name="Tan S.L."/>
            <person name="Tang S."/>
            <person name="Taylor M.S."/>
            <person name="Tegner J."/>
            <person name="Teichmann S.A."/>
            <person name="Ueda H.R."/>
            <person name="van Nimwegen E."/>
            <person name="Verardo R."/>
            <person name="Wei C.L."/>
            <person name="Yagi K."/>
            <person name="Yamanishi H."/>
            <person name="Zabarovsky E."/>
            <person name="Zhu S."/>
            <person name="Zimmer A."/>
            <person name="Hide W."/>
            <person name="Bult C."/>
            <person name="Grimmond S.M."/>
            <person name="Teasdale R.D."/>
            <person name="Liu E.T."/>
            <person name="Brusic V."/>
            <person name="Quackenbush J."/>
            <person name="Wahlestedt C."/>
            <person name="Mattick J.S."/>
            <person name="Hume D.A."/>
            <person name="Kai C."/>
            <person name="Sasaki D."/>
            <person name="Tomaru Y."/>
            <person name="Fukuda S."/>
            <person name="Kanamori-Katayama M."/>
            <person name="Suzuki M."/>
            <person name="Aoki J."/>
            <person name="Arakawa T."/>
            <person name="Iida J."/>
            <person name="Imamura K."/>
            <person name="Itoh M."/>
            <person name="Kato T."/>
            <person name="Kawaji H."/>
            <person name="Kawagashira N."/>
            <person name="Kawashima T."/>
            <person name="Kojima M."/>
            <person name="Kondo S."/>
            <person name="Konno H."/>
            <person name="Nakano K."/>
            <person name="Ninomiya N."/>
            <person name="Nishio T."/>
            <person name="Okada M."/>
            <person name="Plessy C."/>
            <person name="Shibata K."/>
            <person name="Shiraki T."/>
            <person name="Suzuki S."/>
            <person name="Tagami M."/>
            <person name="Waki K."/>
            <person name="Watahiki A."/>
            <person name="Okamura-Oho Y."/>
            <person name="Suzuki H."/>
            <person name="Kawai J."/>
            <person name="Hayashizaki Y."/>
        </authorList>
    </citation>
    <scope>NUCLEOTIDE SEQUENCE [LARGE SCALE MRNA]</scope>
    <source>
        <strain>C3H/HeJ</strain>
        <strain>C57BL/6J</strain>
        <strain>NOD</strain>
        <tissue>Aorta</tissue>
        <tissue>Bone marrow</tissue>
        <tissue>Brain</tissue>
        <tissue>Dendritic cell</tissue>
        <tissue>Liver</tissue>
        <tissue>Testis</tissue>
    </source>
</reference>
<reference key="3">
    <citation type="journal article" date="2004" name="Genome Res.">
        <title>The status, quality, and expansion of the NIH full-length cDNA project: the Mammalian Gene Collection (MGC).</title>
        <authorList>
            <consortium name="The MGC Project Team"/>
        </authorList>
    </citation>
    <scope>NUCLEOTIDE SEQUENCE [LARGE SCALE MRNA]</scope>
    <source>
        <strain>FVB/N</strain>
        <tissue>Eye</tissue>
        <tissue>Kidney</tissue>
        <tissue>Mammary tumor</tissue>
    </source>
</reference>
<reference key="4">
    <citation type="journal article" date="2003" name="Proc. Natl. Acad. Sci. U.S.A.">
        <title>Liver-specific mRNA for Insig-2 down-regulated by insulin: implications for fatty acid synthesis.</title>
        <authorList>
            <person name="Yabe D."/>
            <person name="Komuro R."/>
            <person name="Liang G."/>
            <person name="Goldstein J.L."/>
            <person name="Brown M.S."/>
        </authorList>
    </citation>
    <scope>FUNCTION</scope>
    <scope>TISSUE SPECIFICITY</scope>
</reference>
<reference key="5">
    <citation type="journal article" date="2003" name="Proc. Natl. Acad. Sci. U.S.A.">
        <title>Insig-1 'brakes' lipogenesis in adipocytes and inhibits differentiation of preadipocytes.</title>
        <authorList>
            <person name="Li J."/>
            <person name="Takaishi K."/>
            <person name="Cook W."/>
            <person name="McCorkle S.K."/>
            <person name="Unger R.H."/>
        </authorList>
    </citation>
    <scope>INDUCTION</scope>
</reference>
<reference key="6">
    <citation type="journal article" date="2005" name="J. Clin. Invest.">
        <title>Schoenheimer effect explained--feedback regulation of cholesterol synthesis in mice mediated by Insig proteins.</title>
        <authorList>
            <person name="Engelking L.J."/>
            <person name="Liang G."/>
            <person name="Hammer R.E."/>
            <person name="Takaishi K."/>
            <person name="Kuriyama H."/>
            <person name="Evers B.M."/>
            <person name="Li W.P."/>
            <person name="Horton J.D."/>
            <person name="Goldstein J.L."/>
            <person name="Brown M.S."/>
        </authorList>
    </citation>
    <scope>FUNCTION</scope>
    <scope>DISRUPTION PHENOTYPE</scope>
</reference>
<reference key="7">
    <citation type="journal article" date="2006" name="J. Clin. Invest.">
        <title>Severe facial clefting in Insig-deficient mouse embryos caused by sterol accumulation and reversed by lovastatin.</title>
        <authorList>
            <person name="Engelking L.J."/>
            <person name="Evers B.M."/>
            <person name="Richardson J.A."/>
            <person name="Goldstein J.L."/>
            <person name="Brown M.S."/>
            <person name="Liang G."/>
        </authorList>
    </citation>
    <scope>DISRUPTION PHENOTYPE</scope>
</reference>
<reference key="8">
    <citation type="journal article" date="2017" name="Nat. Rev. Endocrinol.">
        <title>SREBP-regulated lipid metabolism: convergent physiology - divergent pathophysiology.</title>
        <authorList>
            <person name="Shimano H."/>
            <person name="Sato R."/>
        </authorList>
    </citation>
    <scope>REVIEW</scope>
</reference>
<accession>Q91WG1</accession>
<accession>Q3TMY2</accession>
<accession>Q8BWP1</accession>
<name>INSI2_MOUSE</name>
<organism>
    <name type="scientific">Mus musculus</name>
    <name type="common">Mouse</name>
    <dbReference type="NCBI Taxonomy" id="10090"/>
    <lineage>
        <taxon>Eukaryota</taxon>
        <taxon>Metazoa</taxon>
        <taxon>Chordata</taxon>
        <taxon>Craniata</taxon>
        <taxon>Vertebrata</taxon>
        <taxon>Euteleostomi</taxon>
        <taxon>Mammalia</taxon>
        <taxon>Eutheria</taxon>
        <taxon>Euarchontoglires</taxon>
        <taxon>Glires</taxon>
        <taxon>Rodentia</taxon>
        <taxon>Myomorpha</taxon>
        <taxon>Muroidea</taxon>
        <taxon>Muridae</taxon>
        <taxon>Murinae</taxon>
        <taxon>Mus</taxon>
        <taxon>Mus</taxon>
    </lineage>
</organism>
<protein>
    <recommendedName>
        <fullName evidence="8">Insulin-induced gene 2 protein</fullName>
        <shortName evidence="8">INSIG-2</shortName>
    </recommendedName>
</protein>
<evidence type="ECO:0000250" key="1">
    <source>
        <dbReference type="UniProtKB" id="A1T557"/>
    </source>
</evidence>
<evidence type="ECO:0000250" key="2">
    <source>
        <dbReference type="UniProtKB" id="Q9Y5U4"/>
    </source>
</evidence>
<evidence type="ECO:0000269" key="3">
    <source>
    </source>
</evidence>
<evidence type="ECO:0000269" key="4">
    <source>
    </source>
</evidence>
<evidence type="ECO:0000269" key="5">
    <source>
    </source>
</evidence>
<evidence type="ECO:0000269" key="6">
    <source>
    </source>
</evidence>
<evidence type="ECO:0000269" key="7">
    <source>
    </source>
</evidence>
<evidence type="ECO:0000303" key="8">
    <source>
    </source>
</evidence>
<evidence type="ECO:0000305" key="9"/>
<evidence type="ECO:0000312" key="10">
    <source>
        <dbReference type="MGI" id="MGI:1920249"/>
    </source>
</evidence>
<comment type="function">
    <text evidence="2 3 4 6">Oxysterol-binding protein that mediates feedback control of cholesterol synthesis by controlling both endoplasmic reticulum to Golgi transport of SCAP and degradation of HMGCR (PubMed:12242332, PubMed:12624180, PubMed:16100574). Acts as a negative regulator of cholesterol biosynthesis by mediating the retention of the SCAP-SREBP complex in the endoplasmic reticulum, thereby blocking the processing of sterol regulatory element-binding proteins (SREBPs) SREBF1/SREBP1 and SREBF2/SREBP2 (PubMed:16100574). Binds oxysterol, including 22-hydroxycholesterol, 24-hydroxycholesterol, 25-hydroxycholesterol and 27-hydroxycholesterol, regulating interaction with SCAP and retention of the SCAP-SREBP complex in the endoplasmic reticulum (By similarity). In presence of oxysterol, interacts with SCAP, retaining the SCAP-SREBP complex in the endoplasmic reticulum, thereby preventing SCAP from escorting SREBF1/SREBP1 and SREBF2/SREBP2 to the Golgi (By similarity). Sterol deprivation or phosphorylation by PCK1 reduce oxysterol-binding, disrupting the interaction between INSIG2 and SCAP, thereby promoting Golgi transport of the SCAP-SREBP complex, followed by processing and nuclear translocation of SREBF1/SREBP1 and SREBF2/SREBP2 (By similarity). Also regulates cholesterol synthesis by regulating degradation of HMGCR: initiates the sterol-mediated ubiquitin-mediated endoplasmic reticulum-associated degradation (ERAD) of HMGCR via recruitment of the reductase to the ubiquitin ligase RNF139 (By similarity).</text>
</comment>
<comment type="subunit">
    <text evidence="2">Interacts with SCAP; interaction is direct and only takes place in the presence of sterols; it prevents interaction between SCAP and the coat protein complex II (COPII). Associates with the SCAP-SREBP complex (composed of SCAP and SREBF1/SREBP1 or SREBF2/SREBP2); association is mediated via its interaction with SCAP and only takes place in the presence of sterols. Interacts with RNF139. Interacts with RNF145.</text>
</comment>
<comment type="subcellular location">
    <subcellularLocation>
        <location evidence="2">Endoplasmic reticulum membrane</location>
        <topology evidence="2">Multi-pass membrane protein</topology>
    </subcellularLocation>
</comment>
<comment type="tissue specificity">
    <text evidence="4">Expressed in liver, testis, kidney, spleen, intestine, brain and adrenal gland.</text>
</comment>
<comment type="induction">
    <text evidence="5">Up-regulated in differentiating preadipocytes.</text>
</comment>
<comment type="domain">
    <text evidence="2">Binds oxysterols in a pocket within their transmembrane domains and interacts with SCAP via transmembrane domains 3 and 4.</text>
</comment>
<comment type="domain">
    <text evidence="2">The KxHxx motif mediates association with the coatomer complex.</text>
</comment>
<comment type="PTM">
    <text evidence="2">Phosphorylation at Ser-151 by PCK1 reduces binding to oxysterol, disrupting the interaction between INSIG2 and SCAP, thereby promoting nuclear translocation of SREBP proteins (SREBF1/SREBP1 or SREBF2/SREBP2) and subsequent transcription of downstream lipogenesis-related genes.</text>
</comment>
<comment type="PTM">
    <text evidence="2">Polyubiquitinated by AMFR/gp78 at Cys-215 in some tissues such as adipose tissues, undifferentiated myoblasts and liver, leading to its degradation. In differentiated myotubes, Cys-215 oxidation prevents ubiquitination at the same site, resulting in protein stabilization.</text>
</comment>
<comment type="PTM">
    <text evidence="2">Oxidized at Cys-215 in differentiated myotubes, preventing ubiquitination at the same site, and resulting in protein stabilization.</text>
</comment>
<comment type="disruption phenotype">
    <text evidence="6 7">Knockout mice with a conditional deletion of Insig1 in the liver and a germline deletion of Insig2 overaccumulate cholesterol and triglycerides in liver: despite this accumulation, levels of nuclear sterol regulatory element-binding proteins (SREBPs) are not reduced (PubMed:16100574). The amount of HMGCR is also elevated, caused by impaired degradation of the enzyme (PubMed:16100574). Knockout mice with a germline deletion of both Insig1 and Insig2 die within one day of birth (PubMed:16100574, PubMed:16955138). After 18.5 days of development, embryos lacking both Insig1 and Insig2 show defects in midline facial development, ranging from cleft palate to complete cleft face: middle and inner ear structures are abnormal, but teeth and skeletons are normal (PubMed:16955138). The livers and heads of embryos lacking both Insig1 and Insig2 overproduce sterols, causing a marked buildup of sterol intermediates (PubMed:16955138).</text>
</comment>
<comment type="similarity">
    <text evidence="9">Belongs to the INSIG family.</text>
</comment>